<sequence length="373" mass="43248">MSSPDCGYSSDDQIQGSCSVPMMMGQYQWTEPLTVFQDLKPKRDEGSADSRSKAEGRIRRPMNAFMVWAKDERKRLAQQNPDLHNAELSKMLGKSWKSLTLATKRPFVEEAERLRVQHIQDYPDYKYRPRRKKQVKRMKREEDGFLPSANFPGSQIMDNNVMVGENYRMQYSAQNHQQNQLPPAGYFEGHNSMGYYYRDYSVPNYHISQNSSGYDSPPAQDEYQALSYSFNSSYMPYQQNATTPVMAKQMAVTQNIPQESPEHGMMASPQMYNRQMYVSECAKTHPMAQTEQHFPSYQSQKTVRQNYLQSQQDGHLESDIDKTEFDQYLMYEPKADMEIIYTIDQDSGAYSTNLLPSLITEANNVCYYDYCGV</sequence>
<comment type="function">
    <text evidence="4 5 6 8 9 10 12 13 14 15 16 17 18">Transcription activator. Doesn't appear to bind to the consensus 5'-AACAAT-3' DNA binding site, but binds 5'-ATTGTT-3'. All of the sox17 proteins are required for embryonic endoderm development and gastrulation movements, and show some redundancy in function. In addition, the sox17 proteins have distinct but overlapping roles in later gut development. Acts downstream of vegt-signaling in endoderm differentiation to induce a range of endodermal genes both directly and indirectly. Also represses wnt-responsive genes to inhibit wnt/beta-catenin-mediated signaling.</text>
</comment>
<comment type="subunit">
    <text evidence="4 9">Interacts (via C-terminus) with ctnnb1/beta-catenin (via Armadillo repeats); this interaction is required for inhibition of wnt-signaling.</text>
</comment>
<comment type="subcellular location">
    <subcellularLocation>
        <location evidence="2 18">Nucleus</location>
    </subcellularLocation>
</comment>
<comment type="tissue specificity">
    <text evidence="6 14 17 18">In early gastrulae, expressed in the vegetal but not animal hemisphere. The vegetal region is fated to become endoderm and endodermal expression continues throughout gastrulation and neurulation. At tailbud stages, expression is barely detectable.</text>
</comment>
<comment type="developmental stage">
    <text evidence="18">Expressed zygotically from late blastula stage. Expression is barely detectable during tailbud stages and is absent by stage 35 (early tadpole).</text>
</comment>
<comment type="induction">
    <text evidence="7 11 14 16 18">Involved in multiple regulatory feedback loops with other endodermal factors, including the nodal-related factors/Xnrs. Autoinduces. By activin. Directly by vegt; originally cell-autonomously and then cell contact is required for expression to be maintained. By bmp-signaling.</text>
</comment>
<comment type="domain">
    <text evidence="1">The 9aaTAD motif is a transactivation domain present in a large number of yeast and animal transcription factors.</text>
</comment>
<gene>
    <name type="primary">sox17b.1</name>
    <name evidence="19" type="synonym">sox17b</name>
</gene>
<reference evidence="20 22" key="1">
    <citation type="journal article" date="1997" name="Cell">
        <title>Xsox17alpha and -beta mediate endoderm formation in Xenopus.</title>
        <authorList>
            <person name="Hudson C."/>
            <person name="Clements D."/>
            <person name="Friday R.V."/>
            <person name="Stott D."/>
            <person name="Woodland H.R."/>
        </authorList>
    </citation>
    <scope>NUCLEOTIDE SEQUENCE [MRNA]</scope>
    <scope>FUNCTION</scope>
    <scope>SUBCELLULAR LOCATION</scope>
    <scope>TISSUE SPECIFICITY</scope>
    <scope>DEVELOPMENTAL STAGE</scope>
    <scope>INDUCTION</scope>
    <source>
        <tissue evidence="18">Vegetal pole</tissue>
    </source>
</reference>
<reference evidence="21" key="2">
    <citation type="submission" date="2004-05" db="EMBL/GenBank/DDBJ databases">
        <authorList>
            <consortium name="NIH - Xenopus Gene Collection (XGC) project"/>
        </authorList>
    </citation>
    <scope>NUCLEOTIDE SEQUENCE [LARGE SCALE MRNA]</scope>
    <source>
        <tissue evidence="21">Gastrula</tissue>
    </source>
</reference>
<reference evidence="20" key="3">
    <citation type="journal article" date="1999" name="Mol. Cell">
        <title>Regulation of Wnt signaling by Sox proteins: XSox17 alpha/beta and XSox3 physically interact with beta-catenin.</title>
        <authorList>
            <person name="Zorn A.M."/>
            <person name="Barish G.D."/>
            <person name="Williams B.O."/>
            <person name="Lavender P."/>
            <person name="Klymkowsky M.W."/>
            <person name="Varmus H.E."/>
        </authorList>
    </citation>
    <scope>FUNCTION</scope>
    <scope>DNA-BINDING</scope>
    <scope>INTERACTION WITH CTNNB1</scope>
</reference>
<reference evidence="20" key="4">
    <citation type="journal article" date="2000" name="Mech. Dev.">
        <title>Changes in embryonic cell fate produced by expression of an endodermal transcription factor, Xsox17.</title>
        <authorList>
            <person name="Clements D."/>
            <person name="Woodland H.R."/>
        </authorList>
    </citation>
    <scope>FUNCTION</scope>
</reference>
<reference evidence="20" key="5">
    <citation type="journal article" date="2003" name="Mech. Dev.">
        <title>Redundant early and overlapping larval roles of Xsox17 subgroup genes in Xenopus endoderm development.</title>
        <authorList>
            <person name="Clements D."/>
            <person name="Cameleyre I."/>
            <person name="Woodland H.R."/>
        </authorList>
    </citation>
    <scope>FUNCTION</scope>
    <scope>TISSUE SPECIFICITY</scope>
</reference>
<reference evidence="20" key="6">
    <citation type="journal article" date="2003" name="Dev. Biol.">
        <title>VegT induces endoderm by a self-limiting mechanism and by changing the competence of cells to respond to TGF-beta signals.</title>
        <authorList>
            <person name="Clements D."/>
            <person name="Woodland H.R."/>
        </authorList>
    </citation>
    <scope>INDUCTION</scope>
</reference>
<reference evidence="20" key="7">
    <citation type="journal article" date="2004" name="Development">
        <title>Sox17 and beta-catenin cooperate to regulate the transcription of endodermal genes.</title>
        <authorList>
            <person name="Sinner D."/>
            <person name="Rankin S."/>
            <person name="Lee M."/>
            <person name="Zorn A.M."/>
        </authorList>
    </citation>
    <scope>FUNCTION</scope>
    <scope>INTERACTION WITH CTNNB1</scope>
    <scope>MUTAGENESIS OF GLY-93; 324-GLU--TYR-328 AND 326-ASP--TYR-328</scope>
</reference>
<reference evidence="20" key="8">
    <citation type="journal article" date="2004" name="Dev. Biol.">
        <title>Repression of nodal expression by maternal B1-type SOXs regulates germ layer formation in Xenopus and zebrafish.</title>
        <authorList>
            <person name="Zhang C."/>
            <person name="Basta T."/>
            <person name="Hernandez-Lagunas L."/>
            <person name="Simpson P."/>
            <person name="Stemple D.L."/>
            <person name="Artinger K.B."/>
            <person name="Klymkowsky M.W."/>
        </authorList>
    </citation>
    <scope>FUNCTION</scope>
</reference>
<reference evidence="20" key="9">
    <citation type="journal article" date="2004" name="Differentiation">
        <title>Early endodermal expression of the Xenopus Endodermin gene is driven by regulatory sequences containing essential Sox protein-binding elements.</title>
        <authorList>
            <person name="Ahmed N."/>
            <person name="Howard L."/>
            <person name="Woodland H.R."/>
        </authorList>
    </citation>
    <scope>FUNCTION</scope>
</reference>
<reference evidence="20" key="10">
    <citation type="journal article" date="2005" name="Dev. Biol.">
        <title>SOX7 is an immediate-early target of VegT and regulates Nodal-related gene expression in Xenopus.</title>
        <authorList>
            <person name="Zhang C."/>
            <person name="Basta T."/>
            <person name="Fawcett S.R."/>
            <person name="Klymkowsky M.W."/>
        </authorList>
    </citation>
    <scope>INDUCTION</scope>
</reference>
<reference evidence="20" key="11">
    <citation type="journal article" date="2005" name="Dev. Dyn.">
        <title>SOX7 and SOX18 are essential for cardiogenesis in Xenopus.</title>
        <authorList>
            <person name="Zhang C."/>
            <person name="Basta T."/>
            <person name="Klymkowsky M.W."/>
        </authorList>
    </citation>
    <scope>FUNCTION</scope>
</reference>
<reference evidence="20" key="12">
    <citation type="journal article" date="2006" name="Development">
        <title>Global analysis of the transcriptional network controlling Xenopus endoderm formation.</title>
        <authorList>
            <person name="Sinner D."/>
            <person name="Kirilenko P."/>
            <person name="Rankin S."/>
            <person name="Wei E."/>
            <person name="Howard L."/>
            <person name="Kofron M."/>
            <person name="Heasman J."/>
            <person name="Woodland H.R."/>
            <person name="Zorn A.M."/>
        </authorList>
    </citation>
    <scope>FUNCTION</scope>
    <scope>TISSUE SPECIFICITY</scope>
    <scope>INDUCTION</scope>
</reference>
<reference evidence="20" key="13">
    <citation type="journal article" date="2006" name="Dev. Dyn.">
        <title>Genomic profiling of mixer and Sox17beta targets during Xenopus endoderm development.</title>
        <authorList>
            <person name="Dickinson K."/>
            <person name="Leonard J."/>
            <person name="Baker J.C."/>
        </authorList>
    </citation>
    <scope>FUNCTION</scope>
</reference>
<reference evidence="20" key="14">
    <citation type="journal article" date="2007" name="Dev. Biol.">
        <title>Regulation of the Xenopus Xsox17alpha(1) promoter by co-operating VegT and Sox17 sites.</title>
        <authorList>
            <person name="Howard L."/>
            <person name="Rex M."/>
            <person name="Clements D."/>
            <person name="Woodland H.R."/>
        </authorList>
    </citation>
    <scope>FUNCTION</scope>
    <scope>DNA-BINDING</scope>
</reference>
<reference evidence="20" key="15">
    <citation type="journal article" date="2008" name="Cytotechnology">
        <title>Cephalic hedgehog expression is regulated directly by Sox17 in endoderm development of Xenopus laevis.</title>
        <authorList>
            <person name="Yagi Y."/>
            <person name="Ito Y."/>
            <person name="Kuhara S."/>
            <person name="Tashiro K."/>
        </authorList>
    </citation>
    <scope>FUNCTION</scope>
    <scope>TISSUE SPECIFICITY</scope>
</reference>
<reference evidence="20" key="16">
    <citation type="journal article" date="2008" name="Dev. Dyn.">
        <title>Bmp signaling is necessary and sufficient for ventrolateral endoderm specification in Xenopus.</title>
        <authorList>
            <person name="Wills A."/>
            <person name="Dickinson K."/>
            <person name="Khokha M."/>
            <person name="Baker J.C."/>
        </authorList>
    </citation>
    <scope>FUNCTION</scope>
    <scope>INDUCTION</scope>
</reference>
<dbReference type="EMBL" id="AJ001742">
    <property type="protein sequence ID" value="CAA04967.1"/>
    <property type="molecule type" value="mRNA"/>
</dbReference>
<dbReference type="EMBL" id="BC070615">
    <property type="protein sequence ID" value="AAH70615.1"/>
    <property type="molecule type" value="mRNA"/>
</dbReference>
<dbReference type="RefSeq" id="NP_001081633.1">
    <property type="nucleotide sequence ID" value="NM_001088164.1"/>
</dbReference>
<dbReference type="SMR" id="O42601"/>
<dbReference type="DNASU" id="397967"/>
<dbReference type="GeneID" id="397967"/>
<dbReference type="KEGG" id="xla:397967"/>
<dbReference type="AGR" id="Xenbase:XB-GENE-6252148"/>
<dbReference type="CTD" id="397967"/>
<dbReference type="Xenbase" id="XB-GENE-6252148">
    <property type="gene designation" value="sox17b.S"/>
</dbReference>
<dbReference type="OrthoDB" id="9882966at2759"/>
<dbReference type="Proteomes" id="UP000186698">
    <property type="component" value="Chromosome 6S"/>
</dbReference>
<dbReference type="Bgee" id="397967">
    <property type="expression patterns" value="Expressed in gastrula and 4 other cell types or tissues"/>
</dbReference>
<dbReference type="GO" id="GO:0005634">
    <property type="term" value="C:nucleus"/>
    <property type="evidence" value="ECO:0000314"/>
    <property type="project" value="UniProtKB"/>
</dbReference>
<dbReference type="GO" id="GO:0008013">
    <property type="term" value="F:beta-catenin binding"/>
    <property type="evidence" value="ECO:0000314"/>
    <property type="project" value="UniProtKB"/>
</dbReference>
<dbReference type="GO" id="GO:0001228">
    <property type="term" value="F:DNA-binding transcription activator activity, RNA polymerase II-specific"/>
    <property type="evidence" value="ECO:0000318"/>
    <property type="project" value="GO_Central"/>
</dbReference>
<dbReference type="GO" id="GO:0000978">
    <property type="term" value="F:RNA polymerase II cis-regulatory region sequence-specific DNA binding"/>
    <property type="evidence" value="ECO:0000318"/>
    <property type="project" value="GO_Central"/>
</dbReference>
<dbReference type="GO" id="GO:0043565">
    <property type="term" value="F:sequence-specific DNA binding"/>
    <property type="evidence" value="ECO:0000314"/>
    <property type="project" value="UniProtKB"/>
</dbReference>
<dbReference type="GO" id="GO:0030154">
    <property type="term" value="P:cell differentiation"/>
    <property type="evidence" value="ECO:0000318"/>
    <property type="project" value="GO_Central"/>
</dbReference>
<dbReference type="GO" id="GO:0007492">
    <property type="term" value="P:endoderm development"/>
    <property type="evidence" value="ECO:0000315"/>
    <property type="project" value="UniProtKB"/>
</dbReference>
<dbReference type="GO" id="GO:0007369">
    <property type="term" value="P:gastrulation"/>
    <property type="evidence" value="ECO:0007669"/>
    <property type="project" value="UniProtKB-KW"/>
</dbReference>
<dbReference type="GO" id="GO:0007494">
    <property type="term" value="P:midgut development"/>
    <property type="evidence" value="ECO:0000315"/>
    <property type="project" value="UniProtKB"/>
</dbReference>
<dbReference type="GO" id="GO:0000122">
    <property type="term" value="P:negative regulation of transcription by RNA polymerase II"/>
    <property type="evidence" value="ECO:0000315"/>
    <property type="project" value="UniProtKB"/>
</dbReference>
<dbReference type="GO" id="GO:0030178">
    <property type="term" value="P:negative regulation of Wnt signaling pathway"/>
    <property type="evidence" value="ECO:0000316"/>
    <property type="project" value="UniProtKB"/>
</dbReference>
<dbReference type="GO" id="GO:0045893">
    <property type="term" value="P:positive regulation of DNA-templated transcription"/>
    <property type="evidence" value="ECO:0000315"/>
    <property type="project" value="UniProtKB"/>
</dbReference>
<dbReference type="GO" id="GO:0045944">
    <property type="term" value="P:positive regulation of transcription by RNA polymerase II"/>
    <property type="evidence" value="ECO:0000315"/>
    <property type="project" value="UniProtKB"/>
</dbReference>
<dbReference type="GO" id="GO:0016055">
    <property type="term" value="P:Wnt signaling pathway"/>
    <property type="evidence" value="ECO:0007669"/>
    <property type="project" value="UniProtKB-KW"/>
</dbReference>
<dbReference type="CDD" id="cd22032">
    <property type="entry name" value="HMG-box_SoxF"/>
    <property type="match status" value="1"/>
</dbReference>
<dbReference type="FunFam" id="1.10.30.10:FF:000008">
    <property type="entry name" value="transcription factor SOX-7"/>
    <property type="match status" value="1"/>
</dbReference>
<dbReference type="Gene3D" id="1.10.30.10">
    <property type="entry name" value="High mobility group box domain"/>
    <property type="match status" value="1"/>
</dbReference>
<dbReference type="InterPro" id="IPR009071">
    <property type="entry name" value="HMG_box_dom"/>
</dbReference>
<dbReference type="InterPro" id="IPR036910">
    <property type="entry name" value="HMG_box_dom_sf"/>
</dbReference>
<dbReference type="InterPro" id="IPR021934">
    <property type="entry name" value="Sox_C"/>
</dbReference>
<dbReference type="InterPro" id="IPR050140">
    <property type="entry name" value="SRY-related_HMG-box_TF-like"/>
</dbReference>
<dbReference type="PANTHER" id="PTHR10270">
    <property type="entry name" value="SOX TRANSCRIPTION FACTOR"/>
    <property type="match status" value="1"/>
</dbReference>
<dbReference type="PANTHER" id="PTHR10270:SF326">
    <property type="entry name" value="TRANSCRIPTION FACTOR SOX-17-BETA.3"/>
    <property type="match status" value="1"/>
</dbReference>
<dbReference type="Pfam" id="PF00505">
    <property type="entry name" value="HMG_box"/>
    <property type="match status" value="1"/>
</dbReference>
<dbReference type="SMART" id="SM00398">
    <property type="entry name" value="HMG"/>
    <property type="match status" value="1"/>
</dbReference>
<dbReference type="SUPFAM" id="SSF47095">
    <property type="entry name" value="HMG-box"/>
    <property type="match status" value="1"/>
</dbReference>
<dbReference type="PROSITE" id="PS50118">
    <property type="entry name" value="HMG_BOX_2"/>
    <property type="match status" value="1"/>
</dbReference>
<dbReference type="PROSITE" id="PS51516">
    <property type="entry name" value="SOX_C"/>
    <property type="match status" value="1"/>
</dbReference>
<accession>O42601</accession>
<accession>Q6NRU8</accession>
<keyword id="KW-0010">Activator</keyword>
<keyword id="KW-0217">Developmental protein</keyword>
<keyword id="KW-0238">DNA-binding</keyword>
<keyword id="KW-0306">Gastrulation</keyword>
<keyword id="KW-0539">Nucleus</keyword>
<keyword id="KW-1185">Reference proteome</keyword>
<keyword id="KW-0804">Transcription</keyword>
<keyword id="KW-0805">Transcription regulation</keyword>
<keyword id="KW-0879">Wnt signaling pathway</keyword>
<feature type="chain" id="PRO_0000382472" description="Transcription factor Sox-17-beta.1">
    <location>
        <begin position="1"/>
        <end position="373"/>
    </location>
</feature>
<feature type="domain" description="Sox C-terminal" evidence="3">
    <location>
        <begin position="256"/>
        <end position="373"/>
    </location>
</feature>
<feature type="DNA-binding region" description="HMG box" evidence="2">
    <location>
        <begin position="58"/>
        <end position="126"/>
    </location>
</feature>
<feature type="region of interest" description="Required for transcriptional activity and interaction with ctnnb1" evidence="9">
    <location>
        <begin position="324"/>
        <end position="328"/>
    </location>
</feature>
<feature type="short sequence motif" description="9aaTAD" evidence="1">
    <location>
        <begin position="323"/>
        <end position="331"/>
    </location>
</feature>
<feature type="mutagenesis site" description="No effect on ctnnb1-binding." evidence="9">
    <original>G</original>
    <variation>R</variation>
    <location>
        <position position="93"/>
    </location>
</feature>
<feature type="mutagenesis site" description="Significantly reduces transcriptional activation activity. Impairs interaction with ctnnb1." evidence="9">
    <location>
        <begin position="324"/>
        <end position="328"/>
    </location>
</feature>
<feature type="mutagenesis site" description="Significantly reduces transcriptional activation activity. Impairs interaction with ctnnb1." evidence="9">
    <original>DQY</original>
    <variation>GGG</variation>
    <location>
        <begin position="326"/>
        <end position="328"/>
    </location>
</feature>
<feature type="sequence conflict" description="In Ref. 2; AAH70615." evidence="20" ref="2">
    <original>M</original>
    <variation>I</variation>
    <location>
        <position position="193"/>
    </location>
</feature>
<feature type="sequence conflict" description="In Ref. 2; AAH70615." evidence="20" ref="2">
    <original>T</original>
    <variation>M</variation>
    <location>
        <position position="302"/>
    </location>
</feature>
<protein>
    <recommendedName>
        <fullName evidence="1">Transcription factor Sox-17-beta.1</fullName>
    </recommendedName>
    <alternativeName>
        <fullName>SRY (sex determining region Y)-box 17-beta.1</fullName>
    </alternativeName>
    <alternativeName>
        <fullName evidence="19">Transcription factor Sox-17-beta</fullName>
        <shortName evidence="19">XSox17beta</shortName>
    </alternativeName>
</protein>
<name>S17B1_XENLA</name>
<organism>
    <name type="scientific">Xenopus laevis</name>
    <name type="common">African clawed frog</name>
    <dbReference type="NCBI Taxonomy" id="8355"/>
    <lineage>
        <taxon>Eukaryota</taxon>
        <taxon>Metazoa</taxon>
        <taxon>Chordata</taxon>
        <taxon>Craniata</taxon>
        <taxon>Vertebrata</taxon>
        <taxon>Euteleostomi</taxon>
        <taxon>Amphibia</taxon>
        <taxon>Batrachia</taxon>
        <taxon>Anura</taxon>
        <taxon>Pipoidea</taxon>
        <taxon>Pipidae</taxon>
        <taxon>Xenopodinae</taxon>
        <taxon>Xenopus</taxon>
        <taxon>Xenopus</taxon>
    </lineage>
</organism>
<proteinExistence type="evidence at protein level"/>
<evidence type="ECO:0000250" key="1">
    <source>
        <dbReference type="UniProtKB" id="Q9H6I2"/>
    </source>
</evidence>
<evidence type="ECO:0000255" key="2">
    <source>
        <dbReference type="PROSITE-ProRule" id="PRU00267"/>
    </source>
</evidence>
<evidence type="ECO:0000255" key="3">
    <source>
        <dbReference type="PROSITE-ProRule" id="PRU00849"/>
    </source>
</evidence>
<evidence type="ECO:0000269" key="4">
    <source>
    </source>
</evidence>
<evidence type="ECO:0000269" key="5">
    <source>
    </source>
</evidence>
<evidence type="ECO:0000269" key="6">
    <source>
    </source>
</evidence>
<evidence type="ECO:0000269" key="7">
    <source>
    </source>
</evidence>
<evidence type="ECO:0000269" key="8">
    <source>
    </source>
</evidence>
<evidence type="ECO:0000269" key="9">
    <source>
    </source>
</evidence>
<evidence type="ECO:0000269" key="10">
    <source>
    </source>
</evidence>
<evidence type="ECO:0000269" key="11">
    <source>
    </source>
</evidence>
<evidence type="ECO:0000269" key="12">
    <source>
    </source>
</evidence>
<evidence type="ECO:0000269" key="13">
    <source>
    </source>
</evidence>
<evidence type="ECO:0000269" key="14">
    <source>
    </source>
</evidence>
<evidence type="ECO:0000269" key="15">
    <source>
    </source>
</evidence>
<evidence type="ECO:0000269" key="16">
    <source>
    </source>
</evidence>
<evidence type="ECO:0000269" key="17">
    <source>
    </source>
</evidence>
<evidence type="ECO:0000269" key="18">
    <source>
    </source>
</evidence>
<evidence type="ECO:0000303" key="19">
    <source>
    </source>
</evidence>
<evidence type="ECO:0000305" key="20"/>
<evidence type="ECO:0000312" key="21">
    <source>
        <dbReference type="EMBL" id="AAH70615.1"/>
    </source>
</evidence>
<evidence type="ECO:0000312" key="22">
    <source>
        <dbReference type="EMBL" id="CAA04967.1"/>
    </source>
</evidence>